<name>RECF_SYNJA</name>
<accession>Q2JQG8</accession>
<gene>
    <name evidence="1" type="primary">recF</name>
    <name type="ordered locus">CYA_2022</name>
</gene>
<proteinExistence type="inferred from homology"/>
<reference key="1">
    <citation type="journal article" date="2007" name="ISME J.">
        <title>Population level functional diversity in a microbial community revealed by comparative genomic and metagenomic analyses.</title>
        <authorList>
            <person name="Bhaya D."/>
            <person name="Grossman A.R."/>
            <person name="Steunou A.-S."/>
            <person name="Khuri N."/>
            <person name="Cohan F.M."/>
            <person name="Hamamura N."/>
            <person name="Melendrez M.C."/>
            <person name="Bateson M.M."/>
            <person name="Ward D.M."/>
            <person name="Heidelberg J.F."/>
        </authorList>
    </citation>
    <scope>NUCLEOTIDE SEQUENCE [LARGE SCALE GENOMIC DNA]</scope>
    <source>
        <strain>JA-3-3Ab</strain>
    </source>
</reference>
<keyword id="KW-0067">ATP-binding</keyword>
<keyword id="KW-0963">Cytoplasm</keyword>
<keyword id="KW-0227">DNA damage</keyword>
<keyword id="KW-0234">DNA repair</keyword>
<keyword id="KW-0235">DNA replication</keyword>
<keyword id="KW-0238">DNA-binding</keyword>
<keyword id="KW-0547">Nucleotide-binding</keyword>
<keyword id="KW-0742">SOS response</keyword>
<evidence type="ECO:0000255" key="1">
    <source>
        <dbReference type="HAMAP-Rule" id="MF_00365"/>
    </source>
</evidence>
<sequence length="380" mass="42116">MYLRFLHLWHFRNYRDQKISFEAPKTILVGENAQGKTNLLEAVELLATLRSRRAGRDRELVQQGAEKARIAATVERLGVAHELAMELRSQGGRSLRVNGQGLRRQSDFLGQVSAVVFSSLDLELVRGAPEARRTWLDGVLLQLEPAYLGLVEQYRQILKQRNALLKQDPLAAGDKVPQMAFWDAQLATLGSRILRRRARLLQRLEPLAARWHQAISGGRETLSLTYRPQVPLPDPQADPKVVQAQFLAAIRAKAAAEQALGTSLVGPHRDEVELGIDGVAARAYGSQGQQRTLVLALKLAELELIEQVKGDPPLLLLDDVLAELDLHRQNQLLEAIQERVQTLVTTTHLGSFDAAWLQGAQILQVHQGQIAPSPASLPLA</sequence>
<protein>
    <recommendedName>
        <fullName evidence="1">DNA replication and repair protein RecF</fullName>
    </recommendedName>
</protein>
<dbReference type="EMBL" id="CP000239">
    <property type="protein sequence ID" value="ABD00164.1"/>
    <property type="molecule type" value="Genomic_DNA"/>
</dbReference>
<dbReference type="RefSeq" id="WP_011430838.1">
    <property type="nucleotide sequence ID" value="NC_007775.1"/>
</dbReference>
<dbReference type="SMR" id="Q2JQG8"/>
<dbReference type="STRING" id="321327.CYA_2022"/>
<dbReference type="KEGG" id="cya:CYA_2022"/>
<dbReference type="eggNOG" id="COG1195">
    <property type="taxonomic scope" value="Bacteria"/>
</dbReference>
<dbReference type="HOGENOM" id="CLU_040267_0_1_3"/>
<dbReference type="OrthoDB" id="9803889at2"/>
<dbReference type="Proteomes" id="UP000008818">
    <property type="component" value="Chromosome"/>
</dbReference>
<dbReference type="GO" id="GO:0005737">
    <property type="term" value="C:cytoplasm"/>
    <property type="evidence" value="ECO:0007669"/>
    <property type="project" value="UniProtKB-SubCell"/>
</dbReference>
<dbReference type="GO" id="GO:0005524">
    <property type="term" value="F:ATP binding"/>
    <property type="evidence" value="ECO:0007669"/>
    <property type="project" value="UniProtKB-UniRule"/>
</dbReference>
<dbReference type="GO" id="GO:0003697">
    <property type="term" value="F:single-stranded DNA binding"/>
    <property type="evidence" value="ECO:0007669"/>
    <property type="project" value="UniProtKB-UniRule"/>
</dbReference>
<dbReference type="GO" id="GO:0006260">
    <property type="term" value="P:DNA replication"/>
    <property type="evidence" value="ECO:0007669"/>
    <property type="project" value="UniProtKB-UniRule"/>
</dbReference>
<dbReference type="GO" id="GO:0000731">
    <property type="term" value="P:DNA synthesis involved in DNA repair"/>
    <property type="evidence" value="ECO:0007669"/>
    <property type="project" value="TreeGrafter"/>
</dbReference>
<dbReference type="GO" id="GO:0006302">
    <property type="term" value="P:double-strand break repair"/>
    <property type="evidence" value="ECO:0007669"/>
    <property type="project" value="TreeGrafter"/>
</dbReference>
<dbReference type="GO" id="GO:0009432">
    <property type="term" value="P:SOS response"/>
    <property type="evidence" value="ECO:0007669"/>
    <property type="project" value="UniProtKB-UniRule"/>
</dbReference>
<dbReference type="Gene3D" id="3.40.50.300">
    <property type="entry name" value="P-loop containing nucleotide triphosphate hydrolases"/>
    <property type="match status" value="1"/>
</dbReference>
<dbReference type="Gene3D" id="1.20.1050.90">
    <property type="entry name" value="RecF/RecN/SMC, N-terminal domain"/>
    <property type="match status" value="1"/>
</dbReference>
<dbReference type="HAMAP" id="MF_00365">
    <property type="entry name" value="RecF"/>
    <property type="match status" value="1"/>
</dbReference>
<dbReference type="InterPro" id="IPR001238">
    <property type="entry name" value="DNA-binding_RecF"/>
</dbReference>
<dbReference type="InterPro" id="IPR018078">
    <property type="entry name" value="DNA-binding_RecF_CS"/>
</dbReference>
<dbReference type="InterPro" id="IPR027417">
    <property type="entry name" value="P-loop_NTPase"/>
</dbReference>
<dbReference type="InterPro" id="IPR003395">
    <property type="entry name" value="RecF/RecN/SMC_N"/>
</dbReference>
<dbReference type="InterPro" id="IPR042174">
    <property type="entry name" value="RecF_2"/>
</dbReference>
<dbReference type="NCBIfam" id="TIGR00611">
    <property type="entry name" value="recf"/>
    <property type="match status" value="1"/>
</dbReference>
<dbReference type="PANTHER" id="PTHR32182">
    <property type="entry name" value="DNA REPLICATION AND REPAIR PROTEIN RECF"/>
    <property type="match status" value="1"/>
</dbReference>
<dbReference type="PANTHER" id="PTHR32182:SF0">
    <property type="entry name" value="DNA REPLICATION AND REPAIR PROTEIN RECF"/>
    <property type="match status" value="1"/>
</dbReference>
<dbReference type="Pfam" id="PF02463">
    <property type="entry name" value="SMC_N"/>
    <property type="match status" value="1"/>
</dbReference>
<dbReference type="SUPFAM" id="SSF52540">
    <property type="entry name" value="P-loop containing nucleoside triphosphate hydrolases"/>
    <property type="match status" value="1"/>
</dbReference>
<dbReference type="PROSITE" id="PS00617">
    <property type="entry name" value="RECF_1"/>
    <property type="match status" value="1"/>
</dbReference>
<dbReference type="PROSITE" id="PS00618">
    <property type="entry name" value="RECF_2"/>
    <property type="match status" value="1"/>
</dbReference>
<comment type="function">
    <text evidence="1">The RecF protein is involved in DNA metabolism; it is required for DNA replication and normal SOS inducibility. RecF binds preferentially to single-stranded, linear DNA. It also seems to bind ATP.</text>
</comment>
<comment type="subcellular location">
    <subcellularLocation>
        <location evidence="1">Cytoplasm</location>
    </subcellularLocation>
</comment>
<comment type="similarity">
    <text evidence="1">Belongs to the RecF family.</text>
</comment>
<feature type="chain" id="PRO_0000236156" description="DNA replication and repair protein RecF">
    <location>
        <begin position="1"/>
        <end position="380"/>
    </location>
</feature>
<feature type="binding site" evidence="1">
    <location>
        <begin position="30"/>
        <end position="37"/>
    </location>
    <ligand>
        <name>ATP</name>
        <dbReference type="ChEBI" id="CHEBI:30616"/>
    </ligand>
</feature>
<organism>
    <name type="scientific">Synechococcus sp. (strain JA-3-3Ab)</name>
    <name type="common">Cyanobacteria bacterium Yellowstone A-Prime</name>
    <dbReference type="NCBI Taxonomy" id="321327"/>
    <lineage>
        <taxon>Bacteria</taxon>
        <taxon>Bacillati</taxon>
        <taxon>Cyanobacteriota</taxon>
        <taxon>Cyanophyceae</taxon>
        <taxon>Synechococcales</taxon>
        <taxon>Synechococcaceae</taxon>
        <taxon>Synechococcus</taxon>
    </lineage>
</organism>